<keyword id="KW-0066">ATP synthesis</keyword>
<keyword id="KW-0138">CF(0)</keyword>
<keyword id="KW-0150">Chloroplast</keyword>
<keyword id="KW-0375">Hydrogen ion transport</keyword>
<keyword id="KW-0406">Ion transport</keyword>
<keyword id="KW-0472">Membrane</keyword>
<keyword id="KW-0934">Plastid</keyword>
<keyword id="KW-0793">Thylakoid</keyword>
<keyword id="KW-0812">Transmembrane</keyword>
<keyword id="KW-1133">Transmembrane helix</keyword>
<keyword id="KW-0813">Transport</keyword>
<gene>
    <name evidence="1" type="primary">atpF</name>
</gene>
<sequence length="184" mass="20826">MKNVTDSFVSLGHWPYAGSFGFNTDILATNPINLSVVLGVLIFFGKGVLSDLLDNRKQRILSTIRNSEELRGAAIEQLEKARTRLRKVEIEADEFRVNGYSEIEREKSNLINAASENLERLENYKNETIRFEQQKAINQVRQRVFQQALQGALGTLNSCLNKELHLRAISSNISILGAMKEIMD</sequence>
<organism>
    <name type="scientific">Piper cenocladum</name>
    <name type="common">Ant piper</name>
    <dbReference type="NCBI Taxonomy" id="398741"/>
    <lineage>
        <taxon>Eukaryota</taxon>
        <taxon>Viridiplantae</taxon>
        <taxon>Streptophyta</taxon>
        <taxon>Embryophyta</taxon>
        <taxon>Tracheophyta</taxon>
        <taxon>Spermatophyta</taxon>
        <taxon>Magnoliopsida</taxon>
        <taxon>Magnoliidae</taxon>
        <taxon>Piperales</taxon>
        <taxon>Piperaceae</taxon>
        <taxon>Piper</taxon>
    </lineage>
</organism>
<protein>
    <recommendedName>
        <fullName evidence="1">ATP synthase subunit b, chloroplastic</fullName>
    </recommendedName>
    <alternativeName>
        <fullName evidence="1">ATP synthase F(0) sector subunit b</fullName>
    </alternativeName>
    <alternativeName>
        <fullName evidence="1">ATPase subunit I</fullName>
    </alternativeName>
</protein>
<reference key="1">
    <citation type="journal article" date="2006" name="BMC Evol. Biol.">
        <title>Complete plastid genome sequences of Drimys, Liriodendron, and Piper: implications for the phylogenetic relationships of magnoliids.</title>
        <authorList>
            <person name="Cai Z."/>
            <person name="Penaflor C."/>
            <person name="Kuehl J.V."/>
            <person name="Leebens-Mack J."/>
            <person name="Carlson J.E."/>
            <person name="dePamphilis C.W."/>
            <person name="Boore J.L."/>
            <person name="Jansen R.K."/>
        </authorList>
    </citation>
    <scope>NUCLEOTIDE SEQUENCE [LARGE SCALE GENOMIC DNA]</scope>
</reference>
<dbReference type="EMBL" id="DQ887677">
    <property type="protein sequence ID" value="ABI14458.1"/>
    <property type="molecule type" value="Genomic_DNA"/>
</dbReference>
<dbReference type="RefSeq" id="YP_784459.1">
    <property type="nucleotide sequence ID" value="NC_008457.1"/>
</dbReference>
<dbReference type="SMR" id="Q06GS4"/>
<dbReference type="GeneID" id="4363771"/>
<dbReference type="GO" id="GO:0009535">
    <property type="term" value="C:chloroplast thylakoid membrane"/>
    <property type="evidence" value="ECO:0007669"/>
    <property type="project" value="UniProtKB-SubCell"/>
</dbReference>
<dbReference type="GO" id="GO:0045259">
    <property type="term" value="C:proton-transporting ATP synthase complex"/>
    <property type="evidence" value="ECO:0007669"/>
    <property type="project" value="UniProtKB-KW"/>
</dbReference>
<dbReference type="GO" id="GO:0046933">
    <property type="term" value="F:proton-transporting ATP synthase activity, rotational mechanism"/>
    <property type="evidence" value="ECO:0007669"/>
    <property type="project" value="UniProtKB-UniRule"/>
</dbReference>
<dbReference type="CDD" id="cd06503">
    <property type="entry name" value="ATP-synt_Fo_b"/>
    <property type="match status" value="1"/>
</dbReference>
<dbReference type="HAMAP" id="MF_01398">
    <property type="entry name" value="ATP_synth_b_bprime"/>
    <property type="match status" value="1"/>
</dbReference>
<dbReference type="InterPro" id="IPR002146">
    <property type="entry name" value="ATP_synth_b/b'su_bac/chlpt"/>
</dbReference>
<dbReference type="PANTHER" id="PTHR34264">
    <property type="entry name" value="ATP SYNTHASE SUBUNIT B, CHLOROPLASTIC"/>
    <property type="match status" value="1"/>
</dbReference>
<dbReference type="PANTHER" id="PTHR34264:SF3">
    <property type="entry name" value="ATP SYNTHASE SUBUNIT B, CHLOROPLASTIC"/>
    <property type="match status" value="1"/>
</dbReference>
<dbReference type="Pfam" id="PF00430">
    <property type="entry name" value="ATP-synt_B"/>
    <property type="match status" value="1"/>
</dbReference>
<comment type="function">
    <text evidence="1">F(1)F(0) ATP synthase produces ATP from ADP in the presence of a proton or sodium gradient. F-type ATPases consist of two structural domains, F(1) containing the extramembraneous catalytic core and F(0) containing the membrane proton channel, linked together by a central stalk and a peripheral stalk. During catalysis, ATP synthesis in the catalytic domain of F(1) is coupled via a rotary mechanism of the central stalk subunits to proton translocation.</text>
</comment>
<comment type="function">
    <text evidence="1">Component of the F(0) channel, it forms part of the peripheral stalk, linking F(1) to F(0).</text>
</comment>
<comment type="subunit">
    <text evidence="1">F-type ATPases have 2 components, F(1) - the catalytic core - and F(0) - the membrane proton channel. F(1) has five subunits: alpha(3), beta(3), gamma(1), delta(1), epsilon(1). F(0) has four main subunits: a(1), b(1), b'(1) and c(10-14). The alpha and beta chains form an alternating ring which encloses part of the gamma chain. F(1) is attached to F(0) by a central stalk formed by the gamma and epsilon chains, while a peripheral stalk is formed by the delta, b and b' chains.</text>
</comment>
<comment type="subcellular location">
    <subcellularLocation>
        <location evidence="1">Plastid</location>
        <location evidence="1">Chloroplast thylakoid membrane</location>
        <topology evidence="1">Single-pass membrane protein</topology>
    </subcellularLocation>
</comment>
<comment type="miscellaneous">
    <text>In plastids the F-type ATPase is also known as CF(1)CF(0).</text>
</comment>
<comment type="similarity">
    <text evidence="1">Belongs to the ATPase B chain family.</text>
</comment>
<accession>Q06GS4</accession>
<evidence type="ECO:0000255" key="1">
    <source>
        <dbReference type="HAMAP-Rule" id="MF_01398"/>
    </source>
</evidence>
<feature type="chain" id="PRO_0000368971" description="ATP synthase subunit b, chloroplastic">
    <location>
        <begin position="1"/>
        <end position="184"/>
    </location>
</feature>
<feature type="transmembrane region" description="Helical" evidence="1">
    <location>
        <begin position="27"/>
        <end position="49"/>
    </location>
</feature>
<proteinExistence type="inferred from homology"/>
<name>ATPF_PIPCE</name>
<geneLocation type="chloroplast"/>